<proteinExistence type="evidence at protein level"/>
<sequence>GLPVCGETCFGGTCNTPGCSCSYPICTRN</sequence>
<dbReference type="SMR" id="P85239"/>
<dbReference type="GO" id="GO:0006952">
    <property type="term" value="P:defense response"/>
    <property type="evidence" value="ECO:0007669"/>
    <property type="project" value="UniProtKB-KW"/>
</dbReference>
<dbReference type="InterPro" id="IPR005535">
    <property type="entry name" value="Cyclotide"/>
</dbReference>
<dbReference type="InterPro" id="IPR012324">
    <property type="entry name" value="Cyclotide_moebius_CS"/>
</dbReference>
<dbReference type="InterPro" id="IPR036146">
    <property type="entry name" value="Cyclotide_sf"/>
</dbReference>
<dbReference type="Pfam" id="PF03784">
    <property type="entry name" value="Cyclotide"/>
    <property type="match status" value="1"/>
</dbReference>
<dbReference type="PIRSF" id="PIRSF037891">
    <property type="entry name" value="Cycloviolacin"/>
    <property type="match status" value="1"/>
</dbReference>
<dbReference type="SUPFAM" id="SSF57038">
    <property type="entry name" value="Cyclotides"/>
    <property type="match status" value="1"/>
</dbReference>
<dbReference type="PROSITE" id="PS51052">
    <property type="entry name" value="CYCLOTIDE"/>
    <property type="match status" value="1"/>
</dbReference>
<dbReference type="PROSITE" id="PS60009">
    <property type="entry name" value="CYCLOTIDE_MOEBIUS"/>
    <property type="match status" value="1"/>
</dbReference>
<protein>
    <recommendedName>
        <fullName>Cyclotide vibi-A</fullName>
    </recommendedName>
</protein>
<evidence type="ECO:0000250" key="1">
    <source>
        <dbReference type="UniProtKB" id="P56254"/>
    </source>
</evidence>
<evidence type="ECO:0000255" key="2">
    <source>
        <dbReference type="PROSITE-ProRule" id="PRU00395"/>
    </source>
</evidence>
<evidence type="ECO:0000269" key="3">
    <source>
    </source>
</evidence>
<evidence type="ECO:0000305" key="4"/>
<accession>P85239</accession>
<keyword id="KW-0903">Direct protein sequencing</keyword>
<keyword id="KW-1015">Disulfide bond</keyword>
<keyword id="KW-0960">Knottin</keyword>
<keyword id="KW-0611">Plant defense</keyword>
<name>CYVA_VIOBI</name>
<comment type="function">
    <text evidence="4">Probably participates in a plant defense mechanism.</text>
</comment>
<comment type="domain">
    <text evidence="1">The presence of a 'disulfide through disulfide knot' structurally defines this protein as a knottin.</text>
</comment>
<comment type="PTM">
    <text evidence="2 3">This is a cyclic peptide.</text>
</comment>
<comment type="mass spectrometry"/>
<comment type="similarity">
    <text evidence="2">Belongs to the cyclotide family. Moebius subfamily.</text>
</comment>
<comment type="caution">
    <text evidence="4">This peptide is cyclic. The start position was chosen by similarity to OAK1 (kalata-B1) for which the DNA sequence is known.</text>
</comment>
<organism>
    <name type="scientific">Viola biflora</name>
    <name type="common">Yellow wood violet</name>
    <dbReference type="NCBI Taxonomy" id="214529"/>
    <lineage>
        <taxon>Eukaryota</taxon>
        <taxon>Viridiplantae</taxon>
        <taxon>Streptophyta</taxon>
        <taxon>Embryophyta</taxon>
        <taxon>Tracheophyta</taxon>
        <taxon>Spermatophyta</taxon>
        <taxon>Magnoliopsida</taxon>
        <taxon>eudicotyledons</taxon>
        <taxon>Gunneridae</taxon>
        <taxon>Pentapetalae</taxon>
        <taxon>rosids</taxon>
        <taxon>fabids</taxon>
        <taxon>Malpighiales</taxon>
        <taxon>Violaceae</taxon>
        <taxon>Viola</taxon>
        <taxon>Viola subgen. Viola</taxon>
        <taxon>Viola sect. Chamaemelanium</taxon>
    </lineage>
</organism>
<reference evidence="4" key="1">
    <citation type="journal article" date="2008" name="Phytochemistry">
        <title>The alpine violet, Viola biflora, is a rich source of cyclotides with potent cytotoxicity.</title>
        <authorList>
            <person name="Herrmann A."/>
            <person name="Burman R."/>
            <person name="Mylne J.S."/>
            <person name="Karlsson G."/>
            <person name="Gullbo J."/>
            <person name="Craik D.J."/>
            <person name="Clark R.J."/>
            <person name="Goeransson U."/>
        </authorList>
    </citation>
    <scope>PROTEIN SEQUENCE</scope>
    <scope>MASS SPECTROMETRY</scope>
</reference>
<feature type="peptide" id="PRO_0000341421" description="Cyclotide vibi-A">
    <location>
        <begin position="1"/>
        <end position="29"/>
    </location>
</feature>
<feature type="disulfide bond" evidence="1 2">
    <location>
        <begin position="5"/>
        <end position="19"/>
    </location>
</feature>
<feature type="disulfide bond" evidence="1 2">
    <location>
        <begin position="9"/>
        <end position="21"/>
    </location>
</feature>
<feature type="disulfide bond" evidence="1 2">
    <location>
        <begin position="14"/>
        <end position="26"/>
    </location>
</feature>
<feature type="cross-link" description="Cyclopeptide (Gly-Asn)" evidence="3">
    <location>
        <begin position="1"/>
        <end position="29"/>
    </location>
</feature>